<gene>
    <name evidence="9" type="primary">pan-1</name>
    <name evidence="9" type="ORF">M88.6</name>
</gene>
<reference evidence="6" key="1">
    <citation type="journal article" date="2013" name="BMC Dev. Biol.">
        <title>The C. elegans gene pan-1 encodes novel transmembrane and cytoplasmic leucine-rich repeat proteins and promotes molting and the larva to adult transition.</title>
        <authorList>
            <person name="Gissendanner C.R."/>
            <person name="Kelley T.D."/>
        </authorList>
    </citation>
    <scope>NUCLEOTIDE SEQUENCE [MRNA] (ISOFORMS A; B AND C)</scope>
    <scope>FUNCTION</scope>
    <scope>SUBCELLULAR LOCATION</scope>
    <scope>TISSUE SPECIFICITY</scope>
    <scope>DEVELOPMENTAL STAGE</scope>
    <scope>DISRUPTION PHENOTYPE</scope>
</reference>
<reference evidence="7" key="2">
    <citation type="journal article" date="1998" name="Science">
        <title>Genome sequence of the nematode C. elegans: a platform for investigating biology.</title>
        <authorList>
            <consortium name="The C. elegans sequencing consortium"/>
        </authorList>
    </citation>
    <scope>NUCLEOTIDE SEQUENCE [LARGE SCALE GENOMIC DNA]</scope>
    <source>
        <strain evidence="7">Bristol N2</strain>
    </source>
</reference>
<reference evidence="6" key="3">
    <citation type="journal article" date="2012" name="Dev. Biol.">
        <title>PAN-1, a P-granule component important for C. elegans fertility, has dual roles in the germline and soma.</title>
        <authorList>
            <person name="Gao G."/>
            <person name="Deeb F."/>
            <person name="Mercurio J.M."/>
            <person name="Parfenova A."/>
            <person name="Smith P.A."/>
            <person name="Bennett K.L."/>
        </authorList>
    </citation>
    <scope>FUNCTION</scope>
    <scope>INTERACTION WITH GLH-1</scope>
    <scope>SUBCELLULAR LOCATION</scope>
    <scope>TISSUE SPECIFICITY</scope>
    <scope>DISRUPTION PHENOTYPE</scope>
</reference>
<reference key="4">
    <citation type="journal article" date="2021" name="Elife">
        <title>The LRR-TM protein PAN-1 interacts with MYRF to promote its nuclear translocation in synaptic remodeling.</title>
        <authorList>
            <person name="Xia S.L."/>
            <person name="Li M."/>
            <person name="Chen B."/>
            <person name="Wang C."/>
            <person name="Yan Y.H."/>
            <person name="Dong M.Q."/>
            <person name="Qi Y.B."/>
        </authorList>
    </citation>
    <scope>FUNCTION (ISOFORM B)</scope>
    <scope>INTERACTION WITH MYRF-1</scope>
    <scope>SUBCELLULAR LOCATION</scope>
    <scope>DEVELOPMENTAL STAGE</scope>
    <scope>DISRUPTION PHENOTYPE</scope>
</reference>
<organism>
    <name type="scientific">Caenorhabditis elegans</name>
    <dbReference type="NCBI Taxonomy" id="6239"/>
    <lineage>
        <taxon>Eukaryota</taxon>
        <taxon>Metazoa</taxon>
        <taxon>Ecdysozoa</taxon>
        <taxon>Nematoda</taxon>
        <taxon>Chromadorea</taxon>
        <taxon>Rhabditida</taxon>
        <taxon>Rhabditina</taxon>
        <taxon>Rhabditomorpha</taxon>
        <taxon>Rhabditoidea</taxon>
        <taxon>Rhabditidae</taxon>
        <taxon>Peloderinae</taxon>
        <taxon>Caenorhabditis</taxon>
    </lineage>
</organism>
<protein>
    <recommendedName>
        <fullName>P-granule-associated novel protein 1</fullName>
    </recommendedName>
</protein>
<accession>Q9U3A0</accession>
<accession>Q21604</accession>
<accession>S6FWR2</accession>
<name>PAN1_CAEEL</name>
<proteinExistence type="evidence at protein level"/>
<sequence length="594" mass="66371">MRSLLSFVLLALARIAISEETKSCIDIEKGFKEEFNAHKQPVCICADNGIFSTVKGFTIECESASIASVSENLASLNGTELGRLTIRDSTVNVLPQDLFENVFAKQVKLERCGLSTLQPNSFQSLGGSAELLSLRENRIKKLEKGLFTGLKSLKTLDLAMNKIQEIDVGAFEELKKVEELLLNENDIRVLKTGTFDGMKNLKKLTLQNCNLEIIQKGAFRGLNSLEQLILSNNNLENIDWTIFSALKNLRVLDLGSNKISNVEMKSFPKLEKLVLNNNTIDSMKSIKLKDLPSLVVALFDRNKIESIGDMDMFGLTRSDRIETLSLARNNLSQISPKAFQHTPNLITLLLQYNQIEELSSHSPSQVRTPFLASLKKLVTLQLSSNNLSVIRSDELPKSLSSLALDHNVISKIEARALEGMEIKRLYLHSNKLNYLYQGTFDSFSPKSVEAVDVSLNPWVCVCNDPKEWLPRWLEASEEADVAEGALGCLAIPNCGQKEGSTVMPEEEEVYRSGWITVAATILTIVTIVIMVIIAMLYFKDARYQFPLRGRRSDSDLHKLIENDPLNIASDSILVVPAMPKRNTGPKKTVRFQNF</sequence>
<comment type="function">
    <text evidence="2 3">Regulates diverse developmental processes including larval molting and gonad maturation.</text>
</comment>
<comment type="function">
    <molecule>Isoform b</molecule>
    <text evidence="4">Promotes the localization of myrf-1 and myrf-2 to the cell membrane (PubMed:33950834). In association with myrf-1, promotes the synaptic remodeling of DD GABAergic motor neurons whereby new synapses form in the dorsal processes of DD neurons (PubMed:33950834).</text>
</comment>
<comment type="subunit">
    <text evidence="2 4">Interacts with glh-1 (PubMed:22342905). Interacts (via LRR regions) with myrf-1 (via C-terminus); the interaction promotes the role of myrf-1 in the synaptic remodeling of DD GABAergic motor neurons at the cell membrane (PubMed:33950834).</text>
</comment>
<comment type="subcellular location">
    <subcellularLocation>
        <location evidence="2 3 4">Cytoplasm</location>
    </subcellularLocation>
    <subcellularLocation>
        <location evidence="2 3 4">Apical cell membrane</location>
        <topology evidence="2 3">Single-pass type I membrane protein</topology>
    </subcellularLocation>
    <text evidence="2 3">Detected throughout the cytoplasm in germline and somatic blastomeres during embryogenesis and in germline and somatic tissue in adult hermaphrodites. Localizes to P-granules in L1 larval Z2 and Z3 germline precursor cells. Expression in P-granules is most pronounced during the meiotic stage of the germline; in mature oocytes and sperm expression switches to a cytoplasmic pattern.</text>
</comment>
<comment type="alternative products">
    <event type="alternative splicing"/>
    <isoform>
        <id>Q9U3A0-1</id>
        <name evidence="9">b</name>
        <name evidence="5">pan-1b</name>
        <sequence type="displayed"/>
    </isoform>
    <isoform>
        <id>Q9U3A0-2</id>
        <name evidence="8">a</name>
        <sequence type="described" ref="VSP_053556"/>
    </isoform>
    <isoform>
        <id>Q9U3A0-3</id>
        <name evidence="10">c</name>
        <sequence type="described" ref="VSP_053555"/>
    </isoform>
</comment>
<comment type="tissue specificity">
    <molecule>Isoform a</molecule>
    <text evidence="2">Expressed in the germline and somatic cells (PubMed:22342905).</text>
</comment>
<comment type="tissue specificity">
    <molecule>Isoform b</molecule>
    <text evidence="2">Expressed in the germline and somatic cells (PubMed:22342905). Expressed at higher levels in germline cells relative to somatic cells (PubMed:22342905).</text>
</comment>
<comment type="tissue specificity">
    <molecule>Isoform c</molecule>
    <text evidence="2">Expressed in germline cells (PubMed:22342905).</text>
</comment>
<comment type="tissue specificity">
    <text evidence="2 3">Highly expressed in the pharynx and at lower levels in the intestine, but not detected in other tissues (PubMed:22342905). Other studies suggest a broader expression pattern in somatic tissues: from embryogenesis to adult stages, expressed strongly in body wall muscle, vulva, somatic gonad and pharynx, at lower levels in the nerve ring, hypodermis, and rectal epithelia, and very weakly in the intestine (PubMed:23682709).</text>
</comment>
<comment type="developmental stage">
    <text evidence="2 3 4">Expressed at all developmental stages from embryos undergoing morphogenesis to gravid adults (PubMed:23682709). Broadly expressed in embryos and early larvae, but expression decreases in late larvae and adults (PubMed:33950834). Expressed in seam cells during larval development (PubMed:33950834). Expressed in DD GABAergic motor neurons in L1 and L2 stage larva (PubMed:33950834). During larval stage L1, expressed in the pharynx and in intestinal cells (PubMed:22342905). Expressed most strongly during mid-to-late intermolt periods (at protein level) (PubMed:23682709).</text>
</comment>
<comment type="disruption phenotype">
    <text evidence="2 3 4">Larval lethal. Animals developmentally arrest prior to the first larval molt and subsequent growth is slow, although larvae survive for up to 8 days at 20 degrees Celsius. Animals also display uncoordinated locomotion, a shortened cuticle, pharyngeal defects, stunted gonad development, and abnormal vulval morphogenesis. Heterozygous worms have reduced brood sizes. Knockout in DD GABAergic motor neurons results in defective synaptic remodeling of DD GABAergic motor neurons (PubMed:33950834). RNAi-mediated knockdown in the germline, results in sterility and gametogenesis phenotypes including complete absence of oocytes, endomitotically replicating oocytes, and failure to lay eggs. Animals surviving to the L4 stage have hypodermal defects including lack of lateral alae and incomplete seam cell fusion, and fail to express col-19 and mlt-10. RNAi-mediated knockdown in lin-29 null mutants results in partial suppression of the molting and vulval RNAi phenotypes in L4 stage larvae.</text>
</comment>
<dbReference type="EMBL" id="BX284603">
    <property type="protein sequence ID" value="CAA84337.2"/>
    <property type="molecule type" value="Genomic_DNA"/>
</dbReference>
<dbReference type="EMBL" id="BX284603">
    <property type="protein sequence ID" value="CAB54282.1"/>
    <property type="molecule type" value="Genomic_DNA"/>
</dbReference>
<dbReference type="EMBL" id="BX284603">
    <property type="protein sequence ID" value="CDG24160.1"/>
    <property type="molecule type" value="Genomic_DNA"/>
</dbReference>
<dbReference type="PIR" id="T23841">
    <property type="entry name" value="T23841"/>
</dbReference>
<dbReference type="RefSeq" id="NP_001293622.1">
    <molecule id="Q9U3A0-3"/>
    <property type="nucleotide sequence ID" value="NM_001306693.3"/>
</dbReference>
<dbReference type="RefSeq" id="NP_497924.2">
    <molecule id="Q9U3A0-2"/>
    <property type="nucleotide sequence ID" value="NM_065523.8"/>
</dbReference>
<dbReference type="RefSeq" id="NP_497925.1">
    <molecule id="Q9U3A0-1"/>
    <property type="nucleotide sequence ID" value="NM_065524.6"/>
</dbReference>
<dbReference type="SMR" id="Q9U3A0"/>
<dbReference type="BioGRID" id="40832">
    <property type="interactions" value="5"/>
</dbReference>
<dbReference type="FunCoup" id="Q9U3A0">
    <property type="interactions" value="237"/>
</dbReference>
<dbReference type="STRING" id="6239.M88.6b.1"/>
<dbReference type="TCDB" id="8.A.43.1.26">
    <property type="family name" value="the neat-domain containing methaemoglobin heme sequestration (n-mhs) family"/>
</dbReference>
<dbReference type="PaxDb" id="6239-M88.6b"/>
<dbReference type="EnsemblMetazoa" id="M88.6a.1">
    <molecule id="Q9U3A0-2"/>
    <property type="protein sequence ID" value="M88.6a.1"/>
    <property type="gene ID" value="WBGene00003915"/>
</dbReference>
<dbReference type="EnsemblMetazoa" id="M88.6b.1">
    <molecule id="Q9U3A0-1"/>
    <property type="protein sequence ID" value="M88.6b.1"/>
    <property type="gene ID" value="WBGene00003915"/>
</dbReference>
<dbReference type="EnsemblMetazoa" id="M88.6c.1">
    <molecule id="Q9U3A0-3"/>
    <property type="protein sequence ID" value="M88.6c.1"/>
    <property type="gene ID" value="WBGene00003915"/>
</dbReference>
<dbReference type="GeneID" id="175596"/>
<dbReference type="KEGG" id="cel:CELE_M88.6"/>
<dbReference type="UCSC" id="M88.6b">
    <property type="organism name" value="c. elegans"/>
</dbReference>
<dbReference type="AGR" id="WB:WBGene00003915"/>
<dbReference type="CTD" id="175596"/>
<dbReference type="WormBase" id="M88.6a">
    <molecule id="Q9U3A0-2"/>
    <property type="protein sequence ID" value="CE47659"/>
    <property type="gene ID" value="WBGene00003915"/>
    <property type="gene designation" value="pan-1"/>
</dbReference>
<dbReference type="WormBase" id="M88.6b">
    <molecule id="Q9U3A0-1"/>
    <property type="protein sequence ID" value="CE23886"/>
    <property type="gene ID" value="WBGene00003915"/>
    <property type="gene designation" value="pan-1"/>
</dbReference>
<dbReference type="WormBase" id="M88.6c">
    <molecule id="Q9U3A0-3"/>
    <property type="protein sequence ID" value="CE48435"/>
    <property type="gene ID" value="WBGene00003915"/>
    <property type="gene designation" value="pan-1"/>
</dbReference>
<dbReference type="eggNOG" id="KOG0619">
    <property type="taxonomic scope" value="Eukaryota"/>
</dbReference>
<dbReference type="HOGENOM" id="CLU_029738_0_0_1"/>
<dbReference type="InParanoid" id="Q9U3A0"/>
<dbReference type="OMA" id="SKLWIWD"/>
<dbReference type="OrthoDB" id="676979at2759"/>
<dbReference type="PhylomeDB" id="Q9U3A0"/>
<dbReference type="CD-CODE" id="73A75392">
    <property type="entry name" value="P-granule"/>
</dbReference>
<dbReference type="PRO" id="PR:Q9U3A0"/>
<dbReference type="Proteomes" id="UP000001940">
    <property type="component" value="Chromosome III"/>
</dbReference>
<dbReference type="Bgee" id="WBGene00003915">
    <property type="expression patterns" value="Expressed in pharyngeal muscle cell (C elegans) and 4 other cell types or tissues"/>
</dbReference>
<dbReference type="GO" id="GO:0016324">
    <property type="term" value="C:apical plasma membrane"/>
    <property type="evidence" value="ECO:0007669"/>
    <property type="project" value="UniProtKB-SubCell"/>
</dbReference>
<dbReference type="GO" id="GO:0005737">
    <property type="term" value="C:cytoplasm"/>
    <property type="evidence" value="ECO:0000314"/>
    <property type="project" value="WormBase"/>
</dbReference>
<dbReference type="GO" id="GO:0043186">
    <property type="term" value="C:P granule"/>
    <property type="evidence" value="ECO:0000314"/>
    <property type="project" value="WormBase"/>
</dbReference>
<dbReference type="GO" id="GO:0005886">
    <property type="term" value="C:plasma membrane"/>
    <property type="evidence" value="ECO:0000314"/>
    <property type="project" value="WormBase"/>
</dbReference>
<dbReference type="GO" id="GO:0017151">
    <property type="term" value="F:DEAD/H-box RNA helicase binding"/>
    <property type="evidence" value="ECO:0000353"/>
    <property type="project" value="WormBase"/>
</dbReference>
<dbReference type="GO" id="GO:0007281">
    <property type="term" value="P:germ cell development"/>
    <property type="evidence" value="ECO:0000315"/>
    <property type="project" value="WormBase"/>
</dbReference>
<dbReference type="GO" id="GO:0018996">
    <property type="term" value="P:molting cycle, collagen and cuticulin-based cuticle"/>
    <property type="evidence" value="ECO:0000315"/>
    <property type="project" value="WormBase"/>
</dbReference>
<dbReference type="FunFam" id="3.80.10.10:FF:001438">
    <property type="entry name" value="Uncharacterized protein"/>
    <property type="match status" value="1"/>
</dbReference>
<dbReference type="Gene3D" id="3.80.10.10">
    <property type="entry name" value="Ribonuclease Inhibitor"/>
    <property type="match status" value="3"/>
</dbReference>
<dbReference type="InterPro" id="IPR001611">
    <property type="entry name" value="Leu-rich_rpt"/>
</dbReference>
<dbReference type="InterPro" id="IPR003591">
    <property type="entry name" value="Leu-rich_rpt_typical-subtyp"/>
</dbReference>
<dbReference type="InterPro" id="IPR032675">
    <property type="entry name" value="LRR_dom_sf"/>
</dbReference>
<dbReference type="PANTHER" id="PTHR24366">
    <property type="entry name" value="IG(IMMUNOGLOBULIN) AND LRR(LEUCINE RICH REPEAT) DOMAINS"/>
    <property type="match status" value="1"/>
</dbReference>
<dbReference type="PANTHER" id="PTHR24366:SF161">
    <property type="entry name" value="TIR DOMAIN-CONTAINING PROTEIN"/>
    <property type="match status" value="1"/>
</dbReference>
<dbReference type="Pfam" id="PF13855">
    <property type="entry name" value="LRR_8"/>
    <property type="match status" value="4"/>
</dbReference>
<dbReference type="SMART" id="SM00365">
    <property type="entry name" value="LRR_SD22"/>
    <property type="match status" value="4"/>
</dbReference>
<dbReference type="SMART" id="SM00369">
    <property type="entry name" value="LRR_TYP"/>
    <property type="match status" value="11"/>
</dbReference>
<dbReference type="SUPFAM" id="SSF52058">
    <property type="entry name" value="L domain-like"/>
    <property type="match status" value="1"/>
</dbReference>
<dbReference type="PROSITE" id="PS51450">
    <property type="entry name" value="LRR"/>
    <property type="match status" value="10"/>
</dbReference>
<feature type="signal peptide" evidence="1">
    <location>
        <begin position="1"/>
        <end position="18"/>
    </location>
</feature>
<feature type="chain" id="PRO_0000424891" description="P-granule-associated novel protein 1" evidence="1">
    <location>
        <begin position="19"/>
        <end position="594"/>
    </location>
</feature>
<feature type="topological domain" description="Extracellular" evidence="1">
    <location>
        <begin position="19"/>
        <end position="513"/>
    </location>
</feature>
<feature type="transmembrane region" description="Helical" evidence="1">
    <location>
        <begin position="514"/>
        <end position="534"/>
    </location>
</feature>
<feature type="topological domain" description="Cytoplasmic" evidence="1">
    <location>
        <begin position="535"/>
        <end position="594"/>
    </location>
</feature>
<feature type="repeat" description="LRR 1" evidence="1">
    <location>
        <begin position="78"/>
        <end position="101"/>
    </location>
</feature>
<feature type="repeat" description="LRR 2" evidence="1">
    <location>
        <begin position="103"/>
        <end position="124"/>
    </location>
</feature>
<feature type="repeat" description="LRR 3" evidence="1">
    <location>
        <begin position="125"/>
        <end position="149"/>
    </location>
</feature>
<feature type="repeat" description="LRR 4" evidence="1">
    <location>
        <begin position="150"/>
        <end position="173"/>
    </location>
</feature>
<feature type="repeat" description="LRR 5" evidence="1">
    <location>
        <begin position="175"/>
        <end position="197"/>
    </location>
</feature>
<feature type="repeat" description="LRR 6" evidence="1">
    <location>
        <begin position="198"/>
        <end position="221"/>
    </location>
</feature>
<feature type="repeat" description="LRR 7" evidence="1">
    <location>
        <begin position="222"/>
        <end position="245"/>
    </location>
</feature>
<feature type="repeat" description="LRR 8" evidence="1">
    <location>
        <begin position="246"/>
        <end position="269"/>
    </location>
</feature>
<feature type="repeat" description="LRR 9" evidence="1">
    <location>
        <begin position="271"/>
        <end position="290"/>
    </location>
</feature>
<feature type="repeat" description="LRR 10" evidence="1">
    <location>
        <begin position="291"/>
        <end position="315"/>
    </location>
</feature>
<feature type="repeat" description="LRR 11" evidence="1">
    <location>
        <begin position="318"/>
        <end position="341"/>
    </location>
</feature>
<feature type="repeat" description="LRR 12" evidence="1">
    <location>
        <begin position="343"/>
        <end position="365"/>
    </location>
</feature>
<feature type="repeat" description="LRR 13" evidence="1">
    <location>
        <begin position="374"/>
        <end position="397"/>
    </location>
</feature>
<feature type="repeat" description="LRR 14" evidence="1">
    <location>
        <begin position="399"/>
        <end position="419"/>
    </location>
</feature>
<feature type="repeat" description="LRR 15" evidence="1">
    <location>
        <begin position="420"/>
        <end position="442"/>
    </location>
</feature>
<feature type="splice variant" id="VSP_053555" description="In isoform c." evidence="6">
    <location>
        <begin position="1"/>
        <end position="502"/>
    </location>
</feature>
<feature type="splice variant" id="VSP_053556" description="In isoform a." evidence="6">
    <location>
        <begin position="1"/>
        <end position="309"/>
    </location>
</feature>
<evidence type="ECO:0000255" key="1"/>
<evidence type="ECO:0000269" key="2">
    <source>
    </source>
</evidence>
<evidence type="ECO:0000269" key="3">
    <source>
    </source>
</evidence>
<evidence type="ECO:0000269" key="4">
    <source>
    </source>
</evidence>
<evidence type="ECO:0000303" key="5">
    <source>
    </source>
</evidence>
<evidence type="ECO:0000305" key="6"/>
<evidence type="ECO:0000312" key="7">
    <source>
        <dbReference type="EMBL" id="CAB54282.1"/>
    </source>
</evidence>
<evidence type="ECO:0000312" key="8">
    <source>
        <dbReference type="WormBase" id="M88.6a"/>
    </source>
</evidence>
<evidence type="ECO:0000312" key="9">
    <source>
        <dbReference type="WormBase" id="M88.6b"/>
    </source>
</evidence>
<evidence type="ECO:0000312" key="10">
    <source>
        <dbReference type="WormBase" id="M88.6c"/>
    </source>
</evidence>
<keyword id="KW-0025">Alternative splicing</keyword>
<keyword id="KW-1003">Cell membrane</keyword>
<keyword id="KW-0963">Cytoplasm</keyword>
<keyword id="KW-0217">Developmental protein</keyword>
<keyword id="KW-0433">Leucine-rich repeat</keyword>
<keyword id="KW-0472">Membrane</keyword>
<keyword id="KW-1185">Reference proteome</keyword>
<keyword id="KW-0677">Repeat</keyword>
<keyword id="KW-0732">Signal</keyword>
<keyword id="KW-0812">Transmembrane</keyword>
<keyword id="KW-1133">Transmembrane helix</keyword>